<organism>
    <name type="scientific">Escherichia coli (strain SMS-3-5 / SECEC)</name>
    <dbReference type="NCBI Taxonomy" id="439855"/>
    <lineage>
        <taxon>Bacteria</taxon>
        <taxon>Pseudomonadati</taxon>
        <taxon>Pseudomonadota</taxon>
        <taxon>Gammaproteobacteria</taxon>
        <taxon>Enterobacterales</taxon>
        <taxon>Enterobacteriaceae</taxon>
        <taxon>Escherichia</taxon>
    </lineage>
</organism>
<keyword id="KW-0997">Cell inner membrane</keyword>
<keyword id="KW-1003">Cell membrane</keyword>
<keyword id="KW-0328">Glycosyltransferase</keyword>
<keyword id="KW-0472">Membrane</keyword>
<keyword id="KW-0808">Transferase</keyword>
<gene>
    <name evidence="1" type="primary">wecF</name>
    <name evidence="1" type="synonym">rffT</name>
    <name type="ordered locus">EcSMS35_4157</name>
</gene>
<dbReference type="EC" id="2.4.1.325" evidence="1"/>
<dbReference type="EMBL" id="CP000970">
    <property type="protein sequence ID" value="ACB17985.1"/>
    <property type="molecule type" value="Genomic_DNA"/>
</dbReference>
<dbReference type="RefSeq" id="WP_000217271.1">
    <property type="nucleotide sequence ID" value="NC_010498.1"/>
</dbReference>
<dbReference type="SMR" id="B1LLW6"/>
<dbReference type="CAZy" id="GT56">
    <property type="family name" value="Glycosyltransferase Family 56"/>
</dbReference>
<dbReference type="KEGG" id="ecm:EcSMS35_4157"/>
<dbReference type="HOGENOM" id="CLU_066584_0_0_6"/>
<dbReference type="UniPathway" id="UPA00566"/>
<dbReference type="Proteomes" id="UP000007011">
    <property type="component" value="Chromosome"/>
</dbReference>
<dbReference type="GO" id="GO:0005886">
    <property type="term" value="C:plasma membrane"/>
    <property type="evidence" value="ECO:0007669"/>
    <property type="project" value="UniProtKB-SubCell"/>
</dbReference>
<dbReference type="GO" id="GO:0102031">
    <property type="term" value="F:4-acetamido-4,6-dideoxy-D-galactose transferase activity"/>
    <property type="evidence" value="ECO:0007669"/>
    <property type="project" value="UniProtKB-EC"/>
</dbReference>
<dbReference type="GO" id="GO:0008417">
    <property type="term" value="F:fucosyltransferase activity"/>
    <property type="evidence" value="ECO:0007669"/>
    <property type="project" value="InterPro"/>
</dbReference>
<dbReference type="GO" id="GO:0009246">
    <property type="term" value="P:enterobacterial common antigen biosynthetic process"/>
    <property type="evidence" value="ECO:0007669"/>
    <property type="project" value="UniProtKB-UniRule"/>
</dbReference>
<dbReference type="GO" id="GO:0036065">
    <property type="term" value="P:fucosylation"/>
    <property type="evidence" value="ECO:0007669"/>
    <property type="project" value="InterPro"/>
</dbReference>
<dbReference type="HAMAP" id="MF_01002">
    <property type="entry name" value="WecF_RffT"/>
    <property type="match status" value="1"/>
</dbReference>
<dbReference type="InterPro" id="IPR009993">
    <property type="entry name" value="WecF"/>
</dbReference>
<dbReference type="NCBIfam" id="NF002752">
    <property type="entry name" value="PRK02797.1-1"/>
    <property type="match status" value="1"/>
</dbReference>
<dbReference type="NCBIfam" id="NF002753">
    <property type="entry name" value="PRK02797.1-2"/>
    <property type="match status" value="1"/>
</dbReference>
<dbReference type="NCBIfam" id="NF002754">
    <property type="entry name" value="PRK02797.1-3"/>
    <property type="match status" value="1"/>
</dbReference>
<dbReference type="Pfam" id="PF07429">
    <property type="entry name" value="Glyco_transf_56"/>
    <property type="match status" value="1"/>
</dbReference>
<proteinExistence type="inferred from homology"/>
<feature type="chain" id="PRO_1000134601" description="TDP-N-acetylfucosamine:lipid II N-acetylfucosaminyltransferase">
    <location>
        <begin position="1"/>
        <end position="359"/>
    </location>
</feature>
<comment type="function">
    <text evidence="1">Catalyzes the synthesis of Und-PP-GlcNAc-ManNAcA-Fuc4NAc (Lipid III), the third lipid-linked intermediate involved in ECA synthesis.</text>
</comment>
<comment type="catalytic activity">
    <reaction evidence="1">
        <text>beta-D-ManNAcA-(1-&gt;4)-alpha-D-GlcNAc-di-trans,octa-cis-undecaprenyl diphosphate + dTDP-4-acetamido-4,6-dideoxy-alpha-D-galactose = alpha-D-FucNAc4-(1-&gt;4)-beta-D-ManNAcA-(1-&gt;4)-D-GlcNAc-undecaprenyl diphosphate + dTDP + H(+)</text>
        <dbReference type="Rhea" id="RHEA:28759"/>
        <dbReference type="ChEBI" id="CHEBI:15378"/>
        <dbReference type="ChEBI" id="CHEBI:58369"/>
        <dbReference type="ChEBI" id="CHEBI:61495"/>
        <dbReference type="ChEBI" id="CHEBI:61496"/>
        <dbReference type="ChEBI" id="CHEBI:68493"/>
        <dbReference type="EC" id="2.4.1.325"/>
    </reaction>
</comment>
<comment type="pathway">
    <text evidence="1">Bacterial outer membrane biogenesis; enterobacterial common antigen biosynthesis.</text>
</comment>
<comment type="subcellular location">
    <subcellularLocation>
        <location evidence="1">Cell inner membrane</location>
        <topology evidence="1">Peripheral membrane protein</topology>
    </subcellularLocation>
</comment>
<comment type="similarity">
    <text evidence="1">Belongs to the glycosyltransferase 56 family.</text>
</comment>
<protein>
    <recommendedName>
        <fullName evidence="1">TDP-N-acetylfucosamine:lipid II N-acetylfucosaminyltransferase</fullName>
        <ecNumber evidence="1">2.4.1.325</ecNumber>
    </recommendedName>
    <alternativeName>
        <fullName evidence="1">4-alpha-L-fucosyltransferase</fullName>
    </alternativeName>
    <alternativeName>
        <fullName evidence="1">TDP-Fuc4NAc:lipid II Fuc4NAc transferase</fullName>
        <shortName evidence="1">Fuc4NAc transferase</shortName>
    </alternativeName>
</protein>
<accession>B1LLW6</accession>
<reference key="1">
    <citation type="journal article" date="2008" name="J. Bacteriol.">
        <title>Insights into the environmental resistance gene pool from the genome sequence of the multidrug-resistant environmental isolate Escherichia coli SMS-3-5.</title>
        <authorList>
            <person name="Fricke W.F."/>
            <person name="Wright M.S."/>
            <person name="Lindell A.H."/>
            <person name="Harkins D.M."/>
            <person name="Baker-Austin C."/>
            <person name="Ravel J."/>
            <person name="Stepanauskas R."/>
        </authorList>
    </citation>
    <scope>NUCLEOTIDE SEQUENCE [LARGE SCALE GENOMIC DNA]</scope>
    <source>
        <strain>SMS-3-5 / SECEC</strain>
    </source>
</reference>
<evidence type="ECO:0000255" key="1">
    <source>
        <dbReference type="HAMAP-Rule" id="MF_01002"/>
    </source>
</evidence>
<sequence length="359" mass="40649">MTVLIHVLGSDIPHHNRTVLRFFNDALAATSEHAREFMVVGKDDGLSDSCPTLSVQFFPGKKSLAEAVIAKAKANRQQRFFFHGQFNPTLWLALLSGGIKPSQFYWHIWGADLYELSSGLRYKLFYPLRRLAQKRVGCVFATRGDLSFFAKTHPKVRGELLYFPTRMDPSLNTMANDRQREGKMTILVGNSGDRSNEHIAALRAVHQQFGDTVKVVVPMGYPPNNEAYIEEVRQAGLELFSEENLQVLSEKLEFDAYLTLLRQCDLGYFIFARQQGIGTLCLLIQAGIPCVLNRENPFWQDMTEQHLPVLFTTDDLNEDIVREAQRQLASVDKNTIAFFSPNYLQGWQRALAIATGEVA</sequence>
<name>WECF_ECOSM</name>